<keyword id="KW-0496">Mitochondrion</keyword>
<keyword id="KW-0687">Ribonucleoprotein</keyword>
<keyword id="KW-0689">Ribosomal protein</keyword>
<comment type="subcellular location">
    <subcellularLocation>
        <location>Mitochondrion</location>
    </subcellularLocation>
</comment>
<comment type="similarity">
    <text evidence="1">Belongs to the universal ribosomal protein uS10 family.</text>
</comment>
<accession>P26869</accession>
<feature type="chain" id="PRO_0000146670" description="Small ribosomal subunit protein uS10m">
    <location>
        <begin position="1"/>
        <end position="102"/>
    </location>
</feature>
<gene>
    <name type="primary">RPS10</name>
</gene>
<organism>
    <name type="scientific">Marchantia polymorpha</name>
    <name type="common">Common liverwort</name>
    <name type="synonym">Marchantia aquatica</name>
    <dbReference type="NCBI Taxonomy" id="3197"/>
    <lineage>
        <taxon>Eukaryota</taxon>
        <taxon>Viridiplantae</taxon>
        <taxon>Streptophyta</taxon>
        <taxon>Embryophyta</taxon>
        <taxon>Marchantiophyta</taxon>
        <taxon>Marchantiopsida</taxon>
        <taxon>Marchantiidae</taxon>
        <taxon>Marchantiales</taxon>
        <taxon>Marchantiaceae</taxon>
        <taxon>Marchantia</taxon>
    </lineage>
</organism>
<sequence length="102" mass="12162">MTAKICIVIKSFENQRSGLLLNTRKIGLPKKQTLYTVLRSPHIDKKSREQFEMRIHKQLLVIETETHKLREKLNWLKLHDLLGVQVKIIFYYQTRLDKVCKS</sequence>
<reference key="1">
    <citation type="journal article" date="1992" name="J. Mol. Biol.">
        <title>Gene organization deduced from the complete sequence of liverwort Marchantia polymorpha mitochondrial DNA. A primitive form of plant mitochondrial genome.</title>
        <authorList>
            <person name="Oda K."/>
            <person name="Yamato K."/>
            <person name="Ohta E."/>
            <person name="Nakamura Y."/>
            <person name="Takemura M."/>
            <person name="Nozato N."/>
            <person name="Akashi K."/>
            <person name="Kanegae T."/>
            <person name="Ogura Y."/>
            <person name="Kohchi T."/>
            <person name="Ohyama K."/>
        </authorList>
    </citation>
    <scope>NUCLEOTIDE SEQUENCE [GENOMIC DNA]</scope>
</reference>
<reference key="2">
    <citation type="journal article" date="1992" name="Nucleic Acids Res.">
        <title>Gene clusters for ribosomal proteins in the mitochondrial genome of a liverwort, Marchantia polymorpha.</title>
        <authorList>
            <person name="Takemura M."/>
            <person name="Oda K."/>
            <person name="Yamato K."/>
            <person name="Ohta E."/>
            <person name="Nakamura Y."/>
            <person name="Nozato N."/>
            <person name="Akashi K."/>
            <person name="Ohyama K."/>
        </authorList>
    </citation>
    <scope>NUCLEOTIDE SEQUENCE [GENOMIC DNA]</scope>
</reference>
<geneLocation type="mitochondrion"/>
<name>RT10_MARPO</name>
<evidence type="ECO:0000305" key="1"/>
<protein>
    <recommendedName>
        <fullName evidence="1">Small ribosomal subunit protein uS10m</fullName>
    </recommendedName>
    <alternativeName>
        <fullName>Ribosomal protein S10, mitochondrial</fullName>
    </alternativeName>
</protein>
<proteinExistence type="inferred from homology"/>
<dbReference type="EMBL" id="M68929">
    <property type="protein sequence ID" value="AAC09414.1"/>
    <property type="molecule type" value="Genomic_DNA"/>
</dbReference>
<dbReference type="PIR" id="S25975">
    <property type="entry name" value="S25975"/>
</dbReference>
<dbReference type="RefSeq" id="NP_054417.1">
    <property type="nucleotide sequence ID" value="NC_001660.1"/>
</dbReference>
<dbReference type="SMR" id="P26869"/>
<dbReference type="GeneID" id="2702466"/>
<dbReference type="GO" id="GO:0005739">
    <property type="term" value="C:mitochondrion"/>
    <property type="evidence" value="ECO:0007669"/>
    <property type="project" value="UniProtKB-SubCell"/>
</dbReference>
<dbReference type="GO" id="GO:1990904">
    <property type="term" value="C:ribonucleoprotein complex"/>
    <property type="evidence" value="ECO:0007669"/>
    <property type="project" value="UniProtKB-KW"/>
</dbReference>
<dbReference type="GO" id="GO:0005840">
    <property type="term" value="C:ribosome"/>
    <property type="evidence" value="ECO:0007669"/>
    <property type="project" value="UniProtKB-KW"/>
</dbReference>
<dbReference type="GO" id="GO:0003735">
    <property type="term" value="F:structural constituent of ribosome"/>
    <property type="evidence" value="ECO:0007669"/>
    <property type="project" value="InterPro"/>
</dbReference>
<dbReference type="GO" id="GO:0006412">
    <property type="term" value="P:translation"/>
    <property type="evidence" value="ECO:0007669"/>
    <property type="project" value="InterPro"/>
</dbReference>
<dbReference type="Gene3D" id="3.30.70.600">
    <property type="entry name" value="Ribosomal protein S10 domain"/>
    <property type="match status" value="1"/>
</dbReference>
<dbReference type="InterPro" id="IPR001848">
    <property type="entry name" value="Ribosomal_uS10"/>
</dbReference>
<dbReference type="InterPro" id="IPR027486">
    <property type="entry name" value="Ribosomal_uS10_dom"/>
</dbReference>
<dbReference type="InterPro" id="IPR036838">
    <property type="entry name" value="Ribosomal_uS10_dom_sf"/>
</dbReference>
<dbReference type="PANTHER" id="PTHR11700">
    <property type="entry name" value="30S RIBOSOMAL PROTEIN S10 FAMILY MEMBER"/>
    <property type="match status" value="1"/>
</dbReference>
<dbReference type="Pfam" id="PF00338">
    <property type="entry name" value="Ribosomal_S10"/>
    <property type="match status" value="1"/>
</dbReference>
<dbReference type="PRINTS" id="PR00971">
    <property type="entry name" value="RIBOSOMALS10"/>
</dbReference>
<dbReference type="SMART" id="SM01403">
    <property type="entry name" value="Ribosomal_S10"/>
    <property type="match status" value="1"/>
</dbReference>
<dbReference type="SUPFAM" id="SSF54999">
    <property type="entry name" value="Ribosomal protein S10"/>
    <property type="match status" value="1"/>
</dbReference>